<dbReference type="EC" id="2.8.4.3" evidence="1"/>
<dbReference type="EMBL" id="AE014291">
    <property type="protein sequence ID" value="AAN31043.1"/>
    <property type="molecule type" value="Genomic_DNA"/>
</dbReference>
<dbReference type="EMBL" id="CP002997">
    <property type="protein sequence ID" value="AEM19460.1"/>
    <property type="molecule type" value="Genomic_DNA"/>
</dbReference>
<dbReference type="RefSeq" id="WP_004691178.1">
    <property type="nucleotide sequence ID" value="NZ_KN046804.1"/>
</dbReference>
<dbReference type="SMR" id="Q8FXU4"/>
<dbReference type="GeneID" id="97534593"/>
<dbReference type="KEGG" id="bms:BR2153"/>
<dbReference type="KEGG" id="bsi:BS1330_I2147"/>
<dbReference type="PATRIC" id="fig|204722.21.peg.659"/>
<dbReference type="HOGENOM" id="CLU_018697_2_0_5"/>
<dbReference type="PhylomeDB" id="Q8FXU4"/>
<dbReference type="Proteomes" id="UP000007104">
    <property type="component" value="Chromosome I"/>
</dbReference>
<dbReference type="GO" id="GO:0005829">
    <property type="term" value="C:cytosol"/>
    <property type="evidence" value="ECO:0007669"/>
    <property type="project" value="TreeGrafter"/>
</dbReference>
<dbReference type="GO" id="GO:0051539">
    <property type="term" value="F:4 iron, 4 sulfur cluster binding"/>
    <property type="evidence" value="ECO:0007669"/>
    <property type="project" value="UniProtKB-UniRule"/>
</dbReference>
<dbReference type="GO" id="GO:0046872">
    <property type="term" value="F:metal ion binding"/>
    <property type="evidence" value="ECO:0007669"/>
    <property type="project" value="UniProtKB-KW"/>
</dbReference>
<dbReference type="GO" id="GO:0035597">
    <property type="term" value="F:N6-isopentenyladenosine methylthiotransferase activity"/>
    <property type="evidence" value="ECO:0007669"/>
    <property type="project" value="TreeGrafter"/>
</dbReference>
<dbReference type="CDD" id="cd01335">
    <property type="entry name" value="Radical_SAM"/>
    <property type="match status" value="1"/>
</dbReference>
<dbReference type="FunFam" id="3.40.50.12160:FF:000003">
    <property type="entry name" value="CDK5 regulatory subunit-associated protein 1"/>
    <property type="match status" value="1"/>
</dbReference>
<dbReference type="FunFam" id="3.80.30.20:FF:000001">
    <property type="entry name" value="tRNA-2-methylthio-N(6)-dimethylallyladenosine synthase 2"/>
    <property type="match status" value="1"/>
</dbReference>
<dbReference type="Gene3D" id="3.40.50.12160">
    <property type="entry name" value="Methylthiotransferase, N-terminal domain"/>
    <property type="match status" value="1"/>
</dbReference>
<dbReference type="Gene3D" id="3.80.30.20">
    <property type="entry name" value="tm_1862 like domain"/>
    <property type="match status" value="1"/>
</dbReference>
<dbReference type="HAMAP" id="MF_01864">
    <property type="entry name" value="tRNA_metthiotr_MiaB"/>
    <property type="match status" value="1"/>
</dbReference>
<dbReference type="InterPro" id="IPR006638">
    <property type="entry name" value="Elp3/MiaA/NifB-like_rSAM"/>
</dbReference>
<dbReference type="InterPro" id="IPR005839">
    <property type="entry name" value="Methylthiotransferase"/>
</dbReference>
<dbReference type="InterPro" id="IPR020612">
    <property type="entry name" value="Methylthiotransferase_CS"/>
</dbReference>
<dbReference type="InterPro" id="IPR013848">
    <property type="entry name" value="Methylthiotransferase_N"/>
</dbReference>
<dbReference type="InterPro" id="IPR038135">
    <property type="entry name" value="Methylthiotransferase_N_sf"/>
</dbReference>
<dbReference type="InterPro" id="IPR006463">
    <property type="entry name" value="MiaB_methiolase"/>
</dbReference>
<dbReference type="InterPro" id="IPR007197">
    <property type="entry name" value="rSAM"/>
</dbReference>
<dbReference type="InterPro" id="IPR023404">
    <property type="entry name" value="rSAM_horseshoe"/>
</dbReference>
<dbReference type="InterPro" id="IPR002792">
    <property type="entry name" value="TRAM_dom"/>
</dbReference>
<dbReference type="NCBIfam" id="TIGR01574">
    <property type="entry name" value="miaB-methiolase"/>
    <property type="match status" value="1"/>
</dbReference>
<dbReference type="NCBIfam" id="TIGR00089">
    <property type="entry name" value="MiaB/RimO family radical SAM methylthiotransferase"/>
    <property type="match status" value="1"/>
</dbReference>
<dbReference type="PANTHER" id="PTHR43020">
    <property type="entry name" value="CDK5 REGULATORY SUBUNIT-ASSOCIATED PROTEIN 1"/>
    <property type="match status" value="1"/>
</dbReference>
<dbReference type="PANTHER" id="PTHR43020:SF2">
    <property type="entry name" value="MITOCHONDRIAL TRNA METHYLTHIOTRANSFERASE CDK5RAP1"/>
    <property type="match status" value="1"/>
</dbReference>
<dbReference type="Pfam" id="PF04055">
    <property type="entry name" value="Radical_SAM"/>
    <property type="match status" value="1"/>
</dbReference>
<dbReference type="Pfam" id="PF01938">
    <property type="entry name" value="TRAM"/>
    <property type="match status" value="1"/>
</dbReference>
<dbReference type="Pfam" id="PF00919">
    <property type="entry name" value="UPF0004"/>
    <property type="match status" value="1"/>
</dbReference>
<dbReference type="SFLD" id="SFLDF00273">
    <property type="entry name" value="(dimethylallyl)adenosine_tRNA"/>
    <property type="match status" value="1"/>
</dbReference>
<dbReference type="SFLD" id="SFLDG01082">
    <property type="entry name" value="B12-binding_domain_containing"/>
    <property type="match status" value="1"/>
</dbReference>
<dbReference type="SFLD" id="SFLDG01061">
    <property type="entry name" value="methylthiotransferase"/>
    <property type="match status" value="1"/>
</dbReference>
<dbReference type="SMART" id="SM00729">
    <property type="entry name" value="Elp3"/>
    <property type="match status" value="1"/>
</dbReference>
<dbReference type="SUPFAM" id="SSF102114">
    <property type="entry name" value="Radical SAM enzymes"/>
    <property type="match status" value="1"/>
</dbReference>
<dbReference type="PROSITE" id="PS51449">
    <property type="entry name" value="MTTASE_N"/>
    <property type="match status" value="1"/>
</dbReference>
<dbReference type="PROSITE" id="PS01278">
    <property type="entry name" value="MTTASE_RADICAL"/>
    <property type="match status" value="1"/>
</dbReference>
<dbReference type="PROSITE" id="PS51918">
    <property type="entry name" value="RADICAL_SAM"/>
    <property type="match status" value="1"/>
</dbReference>
<dbReference type="PROSITE" id="PS50926">
    <property type="entry name" value="TRAM"/>
    <property type="match status" value="1"/>
</dbReference>
<proteinExistence type="inferred from homology"/>
<organism>
    <name type="scientific">Brucella suis biovar 1 (strain 1330)</name>
    <dbReference type="NCBI Taxonomy" id="204722"/>
    <lineage>
        <taxon>Bacteria</taxon>
        <taxon>Pseudomonadati</taxon>
        <taxon>Pseudomonadota</taxon>
        <taxon>Alphaproteobacteria</taxon>
        <taxon>Hyphomicrobiales</taxon>
        <taxon>Brucellaceae</taxon>
        <taxon>Brucella/Ochrobactrum group</taxon>
        <taxon>Brucella</taxon>
    </lineage>
</organism>
<reference key="1">
    <citation type="journal article" date="2002" name="Proc. Natl. Acad. Sci. U.S.A.">
        <title>The Brucella suis genome reveals fundamental similarities between animal and plant pathogens and symbionts.</title>
        <authorList>
            <person name="Paulsen I.T."/>
            <person name="Seshadri R."/>
            <person name="Nelson K.E."/>
            <person name="Eisen J.A."/>
            <person name="Heidelberg J.F."/>
            <person name="Read T.D."/>
            <person name="Dodson R.J."/>
            <person name="Umayam L.A."/>
            <person name="Brinkac L.M."/>
            <person name="Beanan M.J."/>
            <person name="Daugherty S.C."/>
            <person name="DeBoy R.T."/>
            <person name="Durkin A.S."/>
            <person name="Kolonay J.F."/>
            <person name="Madupu R."/>
            <person name="Nelson W.C."/>
            <person name="Ayodeji B."/>
            <person name="Kraul M."/>
            <person name="Shetty J."/>
            <person name="Malek J.A."/>
            <person name="Van Aken S.E."/>
            <person name="Riedmuller S."/>
            <person name="Tettelin H."/>
            <person name="Gill S.R."/>
            <person name="White O."/>
            <person name="Salzberg S.L."/>
            <person name="Hoover D.L."/>
            <person name="Lindler L.E."/>
            <person name="Halling S.M."/>
            <person name="Boyle S.M."/>
            <person name="Fraser C.M."/>
        </authorList>
    </citation>
    <scope>NUCLEOTIDE SEQUENCE [LARGE SCALE GENOMIC DNA]</scope>
    <source>
        <strain>1330</strain>
    </source>
</reference>
<reference key="2">
    <citation type="journal article" date="2011" name="J. Bacteriol.">
        <title>Revised genome sequence of Brucella suis 1330.</title>
        <authorList>
            <person name="Tae H."/>
            <person name="Shallom S."/>
            <person name="Settlage R."/>
            <person name="Preston D."/>
            <person name="Adams L.G."/>
            <person name="Garner H.R."/>
        </authorList>
    </citation>
    <scope>NUCLEOTIDE SEQUENCE [LARGE SCALE GENOMIC DNA]</scope>
    <source>
        <strain>1330</strain>
    </source>
</reference>
<gene>
    <name evidence="1" type="primary">miaB</name>
    <name type="ordered locus">BR2153</name>
    <name type="ordered locus">BS1330_I2147</name>
</gene>
<protein>
    <recommendedName>
        <fullName evidence="1">tRNA-2-methylthio-N(6)-dimethylallyladenosine synthase</fullName>
        <ecNumber evidence="1">2.8.4.3</ecNumber>
    </recommendedName>
    <alternativeName>
        <fullName evidence="1">(Dimethylallyl)adenosine tRNA methylthiotransferase MiaB</fullName>
    </alternativeName>
    <alternativeName>
        <fullName evidence="1">tRNA-i(6)A37 methylthiotransferase</fullName>
    </alternativeName>
</protein>
<keyword id="KW-0004">4Fe-4S</keyword>
<keyword id="KW-0963">Cytoplasm</keyword>
<keyword id="KW-0408">Iron</keyword>
<keyword id="KW-0411">Iron-sulfur</keyword>
<keyword id="KW-0479">Metal-binding</keyword>
<keyword id="KW-0949">S-adenosyl-L-methionine</keyword>
<keyword id="KW-0808">Transferase</keyword>
<keyword id="KW-0819">tRNA processing</keyword>
<name>MIAB_BRUSU</name>
<accession>Q8FXU4</accession>
<accession>G0K9H9</accession>
<sequence>MSDDTTQIEPAMAQETSPRANTRKVFVKTYGCQMNVYDSQRMADSLAAEGYVATDTPDDADLVLLNTCHIREKASEKLYSALGRLRKMKDARAADGKELTIGVAGCVAQAEGQEILRRAPNVDLVIGPQTYHRLPNALARVRGGEKVVETDYAIEDKFEHLPAPRREETRKRGVSAFLTVQEGCDKFCTFCVVPYTRGSEVSRSVKQIVAEAERLADSGVRELTLLGQNVNAWHGEGEDGREWGLGELLFRLARIPGIARLRYTTSHPRDMDDSLIAAHRDLRQLMPYLHLPVQSGSDRILKAMNRRHKADEYLRLIERIRNVRPDMALSGDFIVGFPGETDQDFEDTMQLVRDVNYAQAYSFKYSPRPGTPGADLDDHVEEAVKDERLQRLQALLSAQQYAFQDSMIGRKMDVLLEKPGREAGQMVGRSPWLLPVIIDDNKDRVGDIIHVKIVSTGTNSLIAQKLA</sequence>
<comment type="function">
    <text evidence="1">Catalyzes the methylthiolation of N6-(dimethylallyl)adenosine (i(6)A), leading to the formation of 2-methylthio-N6-(dimethylallyl)adenosine (ms(2)i(6)A) at position 37 in tRNAs that read codons beginning with uridine.</text>
</comment>
<comment type="catalytic activity">
    <reaction evidence="1">
        <text>N(6)-dimethylallyladenosine(37) in tRNA + (sulfur carrier)-SH + AH2 + 2 S-adenosyl-L-methionine = 2-methylsulfanyl-N(6)-dimethylallyladenosine(37) in tRNA + (sulfur carrier)-H + 5'-deoxyadenosine + L-methionine + A + S-adenosyl-L-homocysteine + 2 H(+)</text>
        <dbReference type="Rhea" id="RHEA:37067"/>
        <dbReference type="Rhea" id="RHEA-COMP:10375"/>
        <dbReference type="Rhea" id="RHEA-COMP:10376"/>
        <dbReference type="Rhea" id="RHEA-COMP:14737"/>
        <dbReference type="Rhea" id="RHEA-COMP:14739"/>
        <dbReference type="ChEBI" id="CHEBI:13193"/>
        <dbReference type="ChEBI" id="CHEBI:15378"/>
        <dbReference type="ChEBI" id="CHEBI:17319"/>
        <dbReference type="ChEBI" id="CHEBI:17499"/>
        <dbReference type="ChEBI" id="CHEBI:29917"/>
        <dbReference type="ChEBI" id="CHEBI:57844"/>
        <dbReference type="ChEBI" id="CHEBI:57856"/>
        <dbReference type="ChEBI" id="CHEBI:59789"/>
        <dbReference type="ChEBI" id="CHEBI:64428"/>
        <dbReference type="ChEBI" id="CHEBI:74415"/>
        <dbReference type="ChEBI" id="CHEBI:74417"/>
        <dbReference type="EC" id="2.8.4.3"/>
    </reaction>
</comment>
<comment type="cofactor">
    <cofactor evidence="1">
        <name>[4Fe-4S] cluster</name>
        <dbReference type="ChEBI" id="CHEBI:49883"/>
    </cofactor>
    <text evidence="1">Binds 2 [4Fe-4S] clusters. One cluster is coordinated with 3 cysteines and an exchangeable S-adenosyl-L-methionine.</text>
</comment>
<comment type="subunit">
    <text evidence="1">Monomer.</text>
</comment>
<comment type="subcellular location">
    <subcellularLocation>
        <location evidence="1">Cytoplasm</location>
    </subcellularLocation>
</comment>
<comment type="similarity">
    <text evidence="1">Belongs to the methylthiotransferase family. MiaB subfamily.</text>
</comment>
<evidence type="ECO:0000255" key="1">
    <source>
        <dbReference type="HAMAP-Rule" id="MF_01864"/>
    </source>
</evidence>
<evidence type="ECO:0000255" key="2">
    <source>
        <dbReference type="PROSITE-ProRule" id="PRU01266"/>
    </source>
</evidence>
<evidence type="ECO:0000256" key="3">
    <source>
        <dbReference type="SAM" id="MobiDB-lite"/>
    </source>
</evidence>
<feature type="chain" id="PRO_0000374169" description="tRNA-2-methylthio-N(6)-dimethylallyladenosine synthase">
    <location>
        <begin position="1"/>
        <end position="467"/>
    </location>
</feature>
<feature type="domain" description="MTTase N-terminal" evidence="1">
    <location>
        <begin position="23"/>
        <end position="143"/>
    </location>
</feature>
<feature type="domain" description="Radical SAM core" evidence="2">
    <location>
        <begin position="170"/>
        <end position="402"/>
    </location>
</feature>
<feature type="domain" description="TRAM" evidence="1">
    <location>
        <begin position="405"/>
        <end position="467"/>
    </location>
</feature>
<feature type="region of interest" description="Disordered" evidence="3">
    <location>
        <begin position="1"/>
        <end position="20"/>
    </location>
</feature>
<feature type="binding site" evidence="1">
    <location>
        <position position="32"/>
    </location>
    <ligand>
        <name>[4Fe-4S] cluster</name>
        <dbReference type="ChEBI" id="CHEBI:49883"/>
        <label>1</label>
    </ligand>
</feature>
<feature type="binding site" evidence="1">
    <location>
        <position position="68"/>
    </location>
    <ligand>
        <name>[4Fe-4S] cluster</name>
        <dbReference type="ChEBI" id="CHEBI:49883"/>
        <label>1</label>
    </ligand>
</feature>
<feature type="binding site" evidence="1">
    <location>
        <position position="106"/>
    </location>
    <ligand>
        <name>[4Fe-4S] cluster</name>
        <dbReference type="ChEBI" id="CHEBI:49883"/>
        <label>1</label>
    </ligand>
</feature>
<feature type="binding site" evidence="1">
    <location>
        <position position="184"/>
    </location>
    <ligand>
        <name>[4Fe-4S] cluster</name>
        <dbReference type="ChEBI" id="CHEBI:49883"/>
        <label>2</label>
        <note>4Fe-4S-S-AdoMet</note>
    </ligand>
</feature>
<feature type="binding site" evidence="1">
    <location>
        <position position="188"/>
    </location>
    <ligand>
        <name>[4Fe-4S] cluster</name>
        <dbReference type="ChEBI" id="CHEBI:49883"/>
        <label>2</label>
        <note>4Fe-4S-S-AdoMet</note>
    </ligand>
</feature>
<feature type="binding site" evidence="1">
    <location>
        <position position="191"/>
    </location>
    <ligand>
        <name>[4Fe-4S] cluster</name>
        <dbReference type="ChEBI" id="CHEBI:49883"/>
        <label>2</label>
        <note>4Fe-4S-S-AdoMet</note>
    </ligand>
</feature>